<organism>
    <name type="scientific">Bos taurus</name>
    <name type="common">Bovine</name>
    <dbReference type="NCBI Taxonomy" id="9913"/>
    <lineage>
        <taxon>Eukaryota</taxon>
        <taxon>Metazoa</taxon>
        <taxon>Chordata</taxon>
        <taxon>Craniata</taxon>
        <taxon>Vertebrata</taxon>
        <taxon>Euteleostomi</taxon>
        <taxon>Mammalia</taxon>
        <taxon>Eutheria</taxon>
        <taxon>Laurasiatheria</taxon>
        <taxon>Artiodactyla</taxon>
        <taxon>Ruminantia</taxon>
        <taxon>Pecora</taxon>
        <taxon>Bovidae</taxon>
        <taxon>Bovinae</taxon>
        <taxon>Bos</taxon>
    </lineage>
</organism>
<feature type="chain" id="PRO_0000288873" description="Coiled-coil domain-containing protein 63">
    <location>
        <begin position="1"/>
        <end position="558"/>
    </location>
</feature>
<feature type="region of interest" description="Disordered" evidence="4">
    <location>
        <begin position="1"/>
        <end position="26"/>
    </location>
</feature>
<feature type="region of interest" description="Disordered" evidence="4">
    <location>
        <begin position="531"/>
        <end position="558"/>
    </location>
</feature>
<feature type="coiled-coil region" evidence="3">
    <location>
        <begin position="48"/>
        <end position="289"/>
    </location>
</feature>
<feature type="coiled-coil region" evidence="3">
    <location>
        <begin position="339"/>
        <end position="416"/>
    </location>
</feature>
<feature type="compositionally biased region" description="Basic and acidic residues" evidence="4">
    <location>
        <begin position="9"/>
        <end position="26"/>
    </location>
</feature>
<feature type="compositionally biased region" description="Basic and acidic residues" evidence="4">
    <location>
        <begin position="533"/>
        <end position="551"/>
    </location>
</feature>
<protein>
    <recommendedName>
        <fullName evidence="2">Coiled-coil domain-containing protein 63</fullName>
    </recommendedName>
</protein>
<proteinExistence type="evidence at transcript level"/>
<evidence type="ECO:0000250" key="1">
    <source>
        <dbReference type="UniProtKB" id="Q8CDV6"/>
    </source>
</evidence>
<evidence type="ECO:0000250" key="2">
    <source>
        <dbReference type="UniProtKB" id="Q8NA47"/>
    </source>
</evidence>
<evidence type="ECO:0000255" key="3"/>
<evidence type="ECO:0000256" key="4">
    <source>
        <dbReference type="SAM" id="MobiDB-lite"/>
    </source>
</evidence>
<gene>
    <name evidence="2" type="primary">CCDC63</name>
</gene>
<accession>Q2T9W3</accession>
<name>CCD63_BOVIN</name>
<comment type="function">
    <text evidence="1">Plays a role in spermiogenesis. Involved in the elongation of flagella and the formation of sperm heads.</text>
</comment>
<keyword id="KW-0175">Coiled coil</keyword>
<keyword id="KW-0221">Differentiation</keyword>
<keyword id="KW-1185">Reference proteome</keyword>
<keyword id="KW-0744">Spermatogenesis</keyword>
<dbReference type="EMBL" id="BC111238">
    <property type="protein sequence ID" value="AAI11239.1"/>
    <property type="molecule type" value="mRNA"/>
</dbReference>
<dbReference type="RefSeq" id="NP_001069231.1">
    <property type="nucleotide sequence ID" value="NM_001075763.2"/>
</dbReference>
<dbReference type="EMDB" id="EMD-50664"/>
<dbReference type="SMR" id="Q2T9W3"/>
<dbReference type="FunCoup" id="Q2T9W3">
    <property type="interactions" value="81"/>
</dbReference>
<dbReference type="STRING" id="9913.ENSBTAP00000043247"/>
<dbReference type="PaxDb" id="9913-ENSBTAP00000043247"/>
<dbReference type="Ensembl" id="ENSBTAT00000045892.4">
    <property type="protein sequence ID" value="ENSBTAP00000043247.3"/>
    <property type="gene ID" value="ENSBTAG00000032353.5"/>
</dbReference>
<dbReference type="GeneID" id="518001"/>
<dbReference type="KEGG" id="bta:518001"/>
<dbReference type="CTD" id="160762"/>
<dbReference type="VEuPathDB" id="HostDB:ENSBTAG00000032353"/>
<dbReference type="VGNC" id="VGNC:26907">
    <property type="gene designation" value="CCDC63"/>
</dbReference>
<dbReference type="eggNOG" id="ENOG502QSIU">
    <property type="taxonomic scope" value="Eukaryota"/>
</dbReference>
<dbReference type="GeneTree" id="ENSGT00940000153116"/>
<dbReference type="HOGENOM" id="CLU_027546_2_0_1"/>
<dbReference type="InParanoid" id="Q2T9W3"/>
<dbReference type="OMA" id="MMHKKTQ"/>
<dbReference type="OrthoDB" id="6766775at2759"/>
<dbReference type="TreeFam" id="TF323742"/>
<dbReference type="Proteomes" id="UP000009136">
    <property type="component" value="Chromosome 17"/>
</dbReference>
<dbReference type="Bgee" id="ENSBTAG00000032353">
    <property type="expression patterns" value="Expressed in spermatid and 17 other cell types or tissues"/>
</dbReference>
<dbReference type="GO" id="GO:0005930">
    <property type="term" value="C:axoneme"/>
    <property type="evidence" value="ECO:0000318"/>
    <property type="project" value="GO_Central"/>
</dbReference>
<dbReference type="GO" id="GO:0003341">
    <property type="term" value="P:cilium movement"/>
    <property type="evidence" value="ECO:0000318"/>
    <property type="project" value="GO_Central"/>
</dbReference>
<dbReference type="GO" id="GO:0036158">
    <property type="term" value="P:outer dynein arm assembly"/>
    <property type="evidence" value="ECO:0000318"/>
    <property type="project" value="GO_Central"/>
</dbReference>
<dbReference type="GO" id="GO:0007286">
    <property type="term" value="P:spermatid development"/>
    <property type="evidence" value="ECO:0000250"/>
    <property type="project" value="UniProtKB"/>
</dbReference>
<dbReference type="InterPro" id="IPR051876">
    <property type="entry name" value="ODA-DC/CCD"/>
</dbReference>
<dbReference type="InterPro" id="IPR049258">
    <property type="entry name" value="ODAD1_CC"/>
</dbReference>
<dbReference type="PANTHER" id="PTHR21694">
    <property type="entry name" value="COILED-COIL DOMAIN-CONTAINING PROTEIN 63"/>
    <property type="match status" value="1"/>
</dbReference>
<dbReference type="PANTHER" id="PTHR21694:SF18">
    <property type="entry name" value="COILED-COIL DOMAIN-CONTAINING PROTEIN 63"/>
    <property type="match status" value="1"/>
</dbReference>
<dbReference type="Pfam" id="PF21773">
    <property type="entry name" value="ODAD1_CC"/>
    <property type="match status" value="1"/>
</dbReference>
<sequence>MPTKKHRRKDPESPQEPSEKTKEQLVEGELRKLRQQFRKMVDSRKSFNFRSQQKITNQRKEIKTLQEEQDEITLLLNLIKSSRNLDLNEKNYLELRFLLQTKEDYEALIKSMKLLLAELDEKIVQMEKKIINQRQIFTKIQEANNPRKLQKQIHILETRLNLVTVHFDQMLTTNAKLRKEIEDLRHEKAAYDNVYQHLRRRLLTKKKTMNVAIEQSAQAYEQRLEAMARMAAMKDRQQKDISQYNLEIRELERVYDHETKLKSFLLIKLNDRLEFEEQSKKEEALKAKKYGKKSKGASFESYEVAHLRLLKLTKTGNLNQLIEEFLAKEEKNFARFTYVTELNNDMEMMHKKIERIQNEILRLRSQQKSSHDDSYSILRELEEKLKKTTEEADMYENDYREITKTLEYLKNSVENLFKKINCDATKILVQLGETGKVTDINLPQYFAIIEKKTNDLLVLESYKRLMEMEVAEAEVQPSFLNPFWGGSALLKPAEPIKVIPPVLGADPLSDKLDEVEQPLDHSSLRQMVLSHYATRESRNRDSMPEKGDELKSKKKVTV</sequence>
<reference key="1">
    <citation type="submission" date="2005-12" db="EMBL/GenBank/DDBJ databases">
        <authorList>
            <consortium name="NIH - Mammalian Gene Collection (MGC) project"/>
        </authorList>
    </citation>
    <scope>NUCLEOTIDE SEQUENCE [LARGE SCALE MRNA]</scope>
    <source>
        <strain>Crossbred X Angus</strain>
        <tissue>Liver</tissue>
    </source>
</reference>